<gene>
    <name evidence="1" type="primary">purA</name>
    <name type="ordered locus">CE2597</name>
</gene>
<name>PURA_COREF</name>
<accession>Q8FMB0</accession>
<protein>
    <recommendedName>
        <fullName evidence="1">Adenylosuccinate synthetase</fullName>
        <shortName evidence="1">AMPSase</shortName>
        <shortName evidence="1">AdSS</shortName>
        <ecNumber evidence="1">6.3.4.4</ecNumber>
    </recommendedName>
    <alternativeName>
        <fullName evidence="1">IMP--aspartate ligase</fullName>
    </alternativeName>
</protein>
<evidence type="ECO:0000255" key="1">
    <source>
        <dbReference type="HAMAP-Rule" id="MF_00011"/>
    </source>
</evidence>
<comment type="function">
    <text evidence="1">Plays an important role in the de novo pathway of purine nucleotide biosynthesis. Catalyzes the first committed step in the biosynthesis of AMP from IMP.</text>
</comment>
<comment type="catalytic activity">
    <reaction evidence="1">
        <text>IMP + L-aspartate + GTP = N(6)-(1,2-dicarboxyethyl)-AMP + GDP + phosphate + 2 H(+)</text>
        <dbReference type="Rhea" id="RHEA:15753"/>
        <dbReference type="ChEBI" id="CHEBI:15378"/>
        <dbReference type="ChEBI" id="CHEBI:29991"/>
        <dbReference type="ChEBI" id="CHEBI:37565"/>
        <dbReference type="ChEBI" id="CHEBI:43474"/>
        <dbReference type="ChEBI" id="CHEBI:57567"/>
        <dbReference type="ChEBI" id="CHEBI:58053"/>
        <dbReference type="ChEBI" id="CHEBI:58189"/>
        <dbReference type="EC" id="6.3.4.4"/>
    </reaction>
</comment>
<comment type="cofactor">
    <cofactor evidence="1">
        <name>Mg(2+)</name>
        <dbReference type="ChEBI" id="CHEBI:18420"/>
    </cofactor>
    <text evidence="1">Binds 1 Mg(2+) ion per subunit.</text>
</comment>
<comment type="pathway">
    <text evidence="1">Purine metabolism; AMP biosynthesis via de novo pathway; AMP from IMP: step 1/2.</text>
</comment>
<comment type="subunit">
    <text evidence="1">Homodimer.</text>
</comment>
<comment type="subcellular location">
    <subcellularLocation>
        <location evidence="1">Cytoplasm</location>
    </subcellularLocation>
</comment>
<comment type="similarity">
    <text evidence="1">Belongs to the adenylosuccinate synthetase family.</text>
</comment>
<organism>
    <name type="scientific">Corynebacterium efficiens (strain DSM 44549 / YS-314 / AJ 12310 / JCM 11189 / NBRC 100395)</name>
    <dbReference type="NCBI Taxonomy" id="196164"/>
    <lineage>
        <taxon>Bacteria</taxon>
        <taxon>Bacillati</taxon>
        <taxon>Actinomycetota</taxon>
        <taxon>Actinomycetes</taxon>
        <taxon>Mycobacteriales</taxon>
        <taxon>Corynebacteriaceae</taxon>
        <taxon>Corynebacterium</taxon>
    </lineage>
</organism>
<sequence length="429" mass="46785">MAAIVIVGAQWGDEGKGKATDILGGLVDYVVKPNGGNNAGHTVVVGGEKYELKLLPAGVLSETATPILGNGVVINLEALFEEIDGLEARGADASRLRISANAHLVAPYHQIMDRVQERFLGKRAIGTTGRGIGPTYQDKVGRVGIRVQDIFDESILRQKIESALDVKNQVLVKMYNRKAIVAEETVQYFLSYADRLRPMVIDATLELNKALDEGKHVLMEGGQATMLDVDHGTYPFVTSSNPTAGGACVGSGVGPTRITSTLGIIKAYTTRVGAGPFPTELFDKWGEYLQTVGGEVGVNTGRKRRCGWYDSVIARYASRVNGFTDYFLTKLDVLTGIGEIPICVAYEVDGVRHDEMPMTQSDFHHAKPIFETMPAWDEDITGCRTFEELPQKAQDYVRRLEELSGARFSYIGVGPGRDQTIVLHDVMES</sequence>
<proteinExistence type="inferred from homology"/>
<reference key="1">
    <citation type="journal article" date="2003" name="Genome Res.">
        <title>Comparative complete genome sequence analysis of the amino acid replacements responsible for the thermostability of Corynebacterium efficiens.</title>
        <authorList>
            <person name="Nishio Y."/>
            <person name="Nakamura Y."/>
            <person name="Kawarabayasi Y."/>
            <person name="Usuda Y."/>
            <person name="Kimura E."/>
            <person name="Sugimoto S."/>
            <person name="Matsui K."/>
            <person name="Yamagishi A."/>
            <person name="Kikuchi H."/>
            <person name="Ikeo K."/>
            <person name="Gojobori T."/>
        </authorList>
    </citation>
    <scope>NUCLEOTIDE SEQUENCE [LARGE SCALE GENOMIC DNA]</scope>
    <source>
        <strain>DSM 44549 / YS-314 / AJ 12310 / JCM 11189 / NBRC 100395</strain>
    </source>
</reference>
<dbReference type="EC" id="6.3.4.4" evidence="1"/>
<dbReference type="EMBL" id="BA000035">
    <property type="protein sequence ID" value="BAC19407.1"/>
    <property type="molecule type" value="Genomic_DNA"/>
</dbReference>
<dbReference type="RefSeq" id="WP_006769041.1">
    <property type="nucleotide sequence ID" value="NC_004369.1"/>
</dbReference>
<dbReference type="SMR" id="Q8FMB0"/>
<dbReference type="STRING" id="196164.gene:10743044"/>
<dbReference type="KEGG" id="cef:CE2597"/>
<dbReference type="eggNOG" id="COG0104">
    <property type="taxonomic scope" value="Bacteria"/>
</dbReference>
<dbReference type="HOGENOM" id="CLU_029848_0_0_11"/>
<dbReference type="OrthoDB" id="9807553at2"/>
<dbReference type="UniPathway" id="UPA00075">
    <property type="reaction ID" value="UER00335"/>
</dbReference>
<dbReference type="Proteomes" id="UP000001409">
    <property type="component" value="Chromosome"/>
</dbReference>
<dbReference type="GO" id="GO:0005737">
    <property type="term" value="C:cytoplasm"/>
    <property type="evidence" value="ECO:0007669"/>
    <property type="project" value="UniProtKB-SubCell"/>
</dbReference>
<dbReference type="GO" id="GO:0004019">
    <property type="term" value="F:adenylosuccinate synthase activity"/>
    <property type="evidence" value="ECO:0007669"/>
    <property type="project" value="UniProtKB-UniRule"/>
</dbReference>
<dbReference type="GO" id="GO:0005525">
    <property type="term" value="F:GTP binding"/>
    <property type="evidence" value="ECO:0007669"/>
    <property type="project" value="UniProtKB-UniRule"/>
</dbReference>
<dbReference type="GO" id="GO:0000287">
    <property type="term" value="F:magnesium ion binding"/>
    <property type="evidence" value="ECO:0007669"/>
    <property type="project" value="UniProtKB-UniRule"/>
</dbReference>
<dbReference type="GO" id="GO:0044208">
    <property type="term" value="P:'de novo' AMP biosynthetic process"/>
    <property type="evidence" value="ECO:0007669"/>
    <property type="project" value="UniProtKB-UniRule"/>
</dbReference>
<dbReference type="GO" id="GO:0046040">
    <property type="term" value="P:IMP metabolic process"/>
    <property type="evidence" value="ECO:0007669"/>
    <property type="project" value="TreeGrafter"/>
</dbReference>
<dbReference type="CDD" id="cd03108">
    <property type="entry name" value="AdSS"/>
    <property type="match status" value="1"/>
</dbReference>
<dbReference type="FunFam" id="1.10.300.10:FF:000001">
    <property type="entry name" value="Adenylosuccinate synthetase"/>
    <property type="match status" value="1"/>
</dbReference>
<dbReference type="FunFam" id="3.90.170.10:FF:000001">
    <property type="entry name" value="Adenylosuccinate synthetase"/>
    <property type="match status" value="1"/>
</dbReference>
<dbReference type="Gene3D" id="3.40.440.10">
    <property type="entry name" value="Adenylosuccinate Synthetase, subunit A, domain 1"/>
    <property type="match status" value="1"/>
</dbReference>
<dbReference type="Gene3D" id="1.10.300.10">
    <property type="entry name" value="Adenylosuccinate Synthetase, subunit A, domain 2"/>
    <property type="match status" value="1"/>
</dbReference>
<dbReference type="Gene3D" id="3.90.170.10">
    <property type="entry name" value="Adenylosuccinate Synthetase, subunit A, domain 3"/>
    <property type="match status" value="1"/>
</dbReference>
<dbReference type="HAMAP" id="MF_00011">
    <property type="entry name" value="Adenylosucc_synth"/>
    <property type="match status" value="1"/>
</dbReference>
<dbReference type="InterPro" id="IPR018220">
    <property type="entry name" value="Adenylosuccin_syn_GTP-bd"/>
</dbReference>
<dbReference type="InterPro" id="IPR033128">
    <property type="entry name" value="Adenylosuccin_syn_Lys_AS"/>
</dbReference>
<dbReference type="InterPro" id="IPR042109">
    <property type="entry name" value="Adenylosuccinate_synth_dom1"/>
</dbReference>
<dbReference type="InterPro" id="IPR042110">
    <property type="entry name" value="Adenylosuccinate_synth_dom2"/>
</dbReference>
<dbReference type="InterPro" id="IPR042111">
    <property type="entry name" value="Adenylosuccinate_synth_dom3"/>
</dbReference>
<dbReference type="InterPro" id="IPR001114">
    <property type="entry name" value="Adenylosuccinate_synthetase"/>
</dbReference>
<dbReference type="InterPro" id="IPR027417">
    <property type="entry name" value="P-loop_NTPase"/>
</dbReference>
<dbReference type="NCBIfam" id="NF002223">
    <property type="entry name" value="PRK01117.1"/>
    <property type="match status" value="1"/>
</dbReference>
<dbReference type="NCBIfam" id="TIGR00184">
    <property type="entry name" value="purA"/>
    <property type="match status" value="1"/>
</dbReference>
<dbReference type="PANTHER" id="PTHR11846">
    <property type="entry name" value="ADENYLOSUCCINATE SYNTHETASE"/>
    <property type="match status" value="1"/>
</dbReference>
<dbReference type="PANTHER" id="PTHR11846:SF0">
    <property type="entry name" value="ADENYLOSUCCINATE SYNTHETASE"/>
    <property type="match status" value="1"/>
</dbReference>
<dbReference type="Pfam" id="PF00709">
    <property type="entry name" value="Adenylsucc_synt"/>
    <property type="match status" value="1"/>
</dbReference>
<dbReference type="SMART" id="SM00788">
    <property type="entry name" value="Adenylsucc_synt"/>
    <property type="match status" value="1"/>
</dbReference>
<dbReference type="SUPFAM" id="SSF52540">
    <property type="entry name" value="P-loop containing nucleoside triphosphate hydrolases"/>
    <property type="match status" value="1"/>
</dbReference>
<dbReference type="PROSITE" id="PS01266">
    <property type="entry name" value="ADENYLOSUCCIN_SYN_1"/>
    <property type="match status" value="1"/>
</dbReference>
<dbReference type="PROSITE" id="PS00513">
    <property type="entry name" value="ADENYLOSUCCIN_SYN_2"/>
    <property type="match status" value="1"/>
</dbReference>
<feature type="chain" id="PRO_0000095170" description="Adenylosuccinate synthetase">
    <location>
        <begin position="1"/>
        <end position="429"/>
    </location>
</feature>
<feature type="active site" description="Proton acceptor" evidence="1">
    <location>
        <position position="13"/>
    </location>
</feature>
<feature type="active site" description="Proton donor" evidence="1">
    <location>
        <position position="41"/>
    </location>
</feature>
<feature type="binding site" evidence="1">
    <location>
        <begin position="12"/>
        <end position="18"/>
    </location>
    <ligand>
        <name>GTP</name>
        <dbReference type="ChEBI" id="CHEBI:37565"/>
    </ligand>
</feature>
<feature type="binding site" description="in other chain" evidence="1">
    <location>
        <begin position="13"/>
        <end position="16"/>
    </location>
    <ligand>
        <name>IMP</name>
        <dbReference type="ChEBI" id="CHEBI:58053"/>
        <note>ligand shared between dimeric partners</note>
    </ligand>
</feature>
<feature type="binding site" evidence="1">
    <location>
        <position position="13"/>
    </location>
    <ligand>
        <name>Mg(2+)</name>
        <dbReference type="ChEBI" id="CHEBI:18420"/>
    </ligand>
</feature>
<feature type="binding site" description="in other chain" evidence="1">
    <location>
        <begin position="38"/>
        <end position="41"/>
    </location>
    <ligand>
        <name>IMP</name>
        <dbReference type="ChEBI" id="CHEBI:58053"/>
        <note>ligand shared between dimeric partners</note>
    </ligand>
</feature>
<feature type="binding site" evidence="1">
    <location>
        <begin position="40"/>
        <end position="42"/>
    </location>
    <ligand>
        <name>GTP</name>
        <dbReference type="ChEBI" id="CHEBI:37565"/>
    </ligand>
</feature>
<feature type="binding site" evidence="1">
    <location>
        <position position="40"/>
    </location>
    <ligand>
        <name>Mg(2+)</name>
        <dbReference type="ChEBI" id="CHEBI:18420"/>
    </ligand>
</feature>
<feature type="binding site" description="in other chain" evidence="1">
    <location>
        <position position="128"/>
    </location>
    <ligand>
        <name>IMP</name>
        <dbReference type="ChEBI" id="CHEBI:58053"/>
        <note>ligand shared between dimeric partners</note>
    </ligand>
</feature>
<feature type="binding site" evidence="1">
    <location>
        <position position="142"/>
    </location>
    <ligand>
        <name>IMP</name>
        <dbReference type="ChEBI" id="CHEBI:58053"/>
        <note>ligand shared between dimeric partners</note>
    </ligand>
</feature>
<feature type="binding site" description="in other chain" evidence="1">
    <location>
        <position position="223"/>
    </location>
    <ligand>
        <name>IMP</name>
        <dbReference type="ChEBI" id="CHEBI:58053"/>
        <note>ligand shared between dimeric partners</note>
    </ligand>
</feature>
<feature type="binding site" description="in other chain" evidence="1">
    <location>
        <position position="238"/>
    </location>
    <ligand>
        <name>IMP</name>
        <dbReference type="ChEBI" id="CHEBI:58053"/>
        <note>ligand shared between dimeric partners</note>
    </ligand>
</feature>
<feature type="binding site" evidence="1">
    <location>
        <begin position="298"/>
        <end position="304"/>
    </location>
    <ligand>
        <name>substrate</name>
    </ligand>
</feature>
<feature type="binding site" description="in other chain" evidence="1">
    <location>
        <position position="302"/>
    </location>
    <ligand>
        <name>IMP</name>
        <dbReference type="ChEBI" id="CHEBI:58053"/>
        <note>ligand shared between dimeric partners</note>
    </ligand>
</feature>
<feature type="binding site" evidence="1">
    <location>
        <position position="304"/>
    </location>
    <ligand>
        <name>GTP</name>
        <dbReference type="ChEBI" id="CHEBI:37565"/>
    </ligand>
</feature>
<feature type="binding site" evidence="1">
    <location>
        <begin position="330"/>
        <end position="332"/>
    </location>
    <ligand>
        <name>GTP</name>
        <dbReference type="ChEBI" id="CHEBI:37565"/>
    </ligand>
</feature>
<feature type="binding site" evidence="1">
    <location>
        <begin position="412"/>
        <end position="414"/>
    </location>
    <ligand>
        <name>GTP</name>
        <dbReference type="ChEBI" id="CHEBI:37565"/>
    </ligand>
</feature>
<keyword id="KW-0963">Cytoplasm</keyword>
<keyword id="KW-0342">GTP-binding</keyword>
<keyword id="KW-0436">Ligase</keyword>
<keyword id="KW-0460">Magnesium</keyword>
<keyword id="KW-0479">Metal-binding</keyword>
<keyword id="KW-0547">Nucleotide-binding</keyword>
<keyword id="KW-0658">Purine biosynthesis</keyword>
<keyword id="KW-1185">Reference proteome</keyword>